<accession>Q74LW2</accession>
<gene>
    <name evidence="1" type="primary">rlmH</name>
    <name type="ordered locus">LJ_0071</name>
</gene>
<feature type="chain" id="PRO_0000198132" description="Ribosomal RNA large subunit methyltransferase H">
    <location>
        <begin position="1"/>
        <end position="159"/>
    </location>
</feature>
<feature type="binding site" evidence="1">
    <location>
        <position position="108"/>
    </location>
    <ligand>
        <name>S-adenosyl-L-methionine</name>
        <dbReference type="ChEBI" id="CHEBI:59789"/>
    </ligand>
</feature>
<reference key="1">
    <citation type="journal article" date="2004" name="Proc. Natl. Acad. Sci. U.S.A.">
        <title>The genome sequence of the probiotic intestinal bacterium Lactobacillus johnsonii NCC 533.</title>
        <authorList>
            <person name="Pridmore R.D."/>
            <person name="Berger B."/>
            <person name="Desiere F."/>
            <person name="Vilanova D."/>
            <person name="Barretto C."/>
            <person name="Pittet A.-C."/>
            <person name="Zwahlen M.-C."/>
            <person name="Rouvet M."/>
            <person name="Altermann E."/>
            <person name="Barrangou R."/>
            <person name="Mollet B."/>
            <person name="Mercenier A."/>
            <person name="Klaenhammer T."/>
            <person name="Arigoni F."/>
            <person name="Schell M.A."/>
        </authorList>
    </citation>
    <scope>NUCLEOTIDE SEQUENCE [LARGE SCALE GENOMIC DNA]</scope>
    <source>
        <strain>CNCM I-1225 / La1 / NCC 533</strain>
    </source>
</reference>
<name>RLMH_LACJO</name>
<sequence length="159" mass="18097">MNIKIVCVGKLKEKYFKDGIAEYVKRMSRFAKVKIVQVPDEKAPEKLSPAEMEQVKEIEGKRILDKIKDKEYVYVTAIKGKERTSEAFAKELSDLTTYGHSDITFVIGGSLGTSDAVNKRADDLISFGKFTMPHQLMRLVLIEQIYRAFMINSGSPYHK</sequence>
<proteinExistence type="inferred from homology"/>
<dbReference type="EC" id="2.1.1.177" evidence="1"/>
<dbReference type="EMBL" id="AE017198">
    <property type="protein sequence ID" value="AAS08053.1"/>
    <property type="molecule type" value="Genomic_DNA"/>
</dbReference>
<dbReference type="RefSeq" id="WP_011161307.1">
    <property type="nucleotide sequence ID" value="NC_005362.1"/>
</dbReference>
<dbReference type="SMR" id="Q74LW2"/>
<dbReference type="KEGG" id="ljo:LJ_0071"/>
<dbReference type="PATRIC" id="fig|257314.6.peg.75"/>
<dbReference type="eggNOG" id="COG1576">
    <property type="taxonomic scope" value="Bacteria"/>
</dbReference>
<dbReference type="HOGENOM" id="CLU_100552_0_0_9"/>
<dbReference type="Proteomes" id="UP000000581">
    <property type="component" value="Chromosome"/>
</dbReference>
<dbReference type="GO" id="GO:0005737">
    <property type="term" value="C:cytoplasm"/>
    <property type="evidence" value="ECO:0007669"/>
    <property type="project" value="UniProtKB-SubCell"/>
</dbReference>
<dbReference type="GO" id="GO:0070038">
    <property type="term" value="F:rRNA (pseudouridine-N3-)-methyltransferase activity"/>
    <property type="evidence" value="ECO:0007669"/>
    <property type="project" value="UniProtKB-UniRule"/>
</dbReference>
<dbReference type="CDD" id="cd18081">
    <property type="entry name" value="RlmH-like"/>
    <property type="match status" value="1"/>
</dbReference>
<dbReference type="Gene3D" id="3.40.1280.10">
    <property type="match status" value="1"/>
</dbReference>
<dbReference type="HAMAP" id="MF_00658">
    <property type="entry name" value="23SrRNA_methyltr_H"/>
    <property type="match status" value="1"/>
</dbReference>
<dbReference type="InterPro" id="IPR029028">
    <property type="entry name" value="Alpha/beta_knot_MTases"/>
</dbReference>
<dbReference type="InterPro" id="IPR003742">
    <property type="entry name" value="RlmH-like"/>
</dbReference>
<dbReference type="InterPro" id="IPR029026">
    <property type="entry name" value="tRNA_m1G_MTases_N"/>
</dbReference>
<dbReference type="NCBIfam" id="NF000985">
    <property type="entry name" value="PRK00103.1-3"/>
    <property type="match status" value="1"/>
</dbReference>
<dbReference type="NCBIfam" id="TIGR00246">
    <property type="entry name" value="tRNA_RlmH_YbeA"/>
    <property type="match status" value="1"/>
</dbReference>
<dbReference type="PANTHER" id="PTHR33603">
    <property type="entry name" value="METHYLTRANSFERASE"/>
    <property type="match status" value="1"/>
</dbReference>
<dbReference type="PANTHER" id="PTHR33603:SF1">
    <property type="entry name" value="RIBOSOMAL RNA LARGE SUBUNIT METHYLTRANSFERASE H"/>
    <property type="match status" value="1"/>
</dbReference>
<dbReference type="Pfam" id="PF02590">
    <property type="entry name" value="SPOUT_MTase"/>
    <property type="match status" value="1"/>
</dbReference>
<dbReference type="PIRSF" id="PIRSF004505">
    <property type="entry name" value="MT_bac"/>
    <property type="match status" value="1"/>
</dbReference>
<dbReference type="SUPFAM" id="SSF75217">
    <property type="entry name" value="alpha/beta knot"/>
    <property type="match status" value="1"/>
</dbReference>
<keyword id="KW-0963">Cytoplasm</keyword>
<keyword id="KW-0489">Methyltransferase</keyword>
<keyword id="KW-0698">rRNA processing</keyword>
<keyword id="KW-0949">S-adenosyl-L-methionine</keyword>
<keyword id="KW-0808">Transferase</keyword>
<evidence type="ECO:0000255" key="1">
    <source>
        <dbReference type="HAMAP-Rule" id="MF_00658"/>
    </source>
</evidence>
<comment type="function">
    <text evidence="1">Specifically methylates the pseudouridine at position 1915 (m3Psi1915) in 23S rRNA.</text>
</comment>
<comment type="catalytic activity">
    <reaction evidence="1">
        <text>pseudouridine(1915) in 23S rRNA + S-adenosyl-L-methionine = N(3)-methylpseudouridine(1915) in 23S rRNA + S-adenosyl-L-homocysteine + H(+)</text>
        <dbReference type="Rhea" id="RHEA:42752"/>
        <dbReference type="Rhea" id="RHEA-COMP:10221"/>
        <dbReference type="Rhea" id="RHEA-COMP:10222"/>
        <dbReference type="ChEBI" id="CHEBI:15378"/>
        <dbReference type="ChEBI" id="CHEBI:57856"/>
        <dbReference type="ChEBI" id="CHEBI:59789"/>
        <dbReference type="ChEBI" id="CHEBI:65314"/>
        <dbReference type="ChEBI" id="CHEBI:74486"/>
        <dbReference type="EC" id="2.1.1.177"/>
    </reaction>
</comment>
<comment type="subunit">
    <text evidence="1">Homodimer.</text>
</comment>
<comment type="subcellular location">
    <subcellularLocation>
        <location evidence="1">Cytoplasm</location>
    </subcellularLocation>
</comment>
<comment type="similarity">
    <text evidence="1">Belongs to the RNA methyltransferase RlmH family.</text>
</comment>
<protein>
    <recommendedName>
        <fullName evidence="1">Ribosomal RNA large subunit methyltransferase H</fullName>
        <ecNumber evidence="1">2.1.1.177</ecNumber>
    </recommendedName>
    <alternativeName>
        <fullName evidence="1">23S rRNA (pseudouridine1915-N3)-methyltransferase</fullName>
    </alternativeName>
    <alternativeName>
        <fullName evidence="1">23S rRNA m3Psi1915 methyltransferase</fullName>
    </alternativeName>
    <alternativeName>
        <fullName evidence="1">rRNA (pseudouridine-N3-)-methyltransferase RlmH</fullName>
    </alternativeName>
</protein>
<organism>
    <name type="scientific">Lactobacillus johnsonii (strain CNCM I-12250 / La1 / NCC 533)</name>
    <dbReference type="NCBI Taxonomy" id="257314"/>
    <lineage>
        <taxon>Bacteria</taxon>
        <taxon>Bacillati</taxon>
        <taxon>Bacillota</taxon>
        <taxon>Bacilli</taxon>
        <taxon>Lactobacillales</taxon>
        <taxon>Lactobacillaceae</taxon>
        <taxon>Lactobacillus</taxon>
    </lineage>
</organism>